<comment type="function">
    <text evidence="1">Probably functions as a manganese efflux pump.</text>
</comment>
<comment type="subcellular location">
    <subcellularLocation>
        <location evidence="1">Cell inner membrane</location>
        <topology evidence="1">Multi-pass membrane protein</topology>
    </subcellularLocation>
</comment>
<comment type="similarity">
    <text evidence="1">Belongs to the MntP (TC 9.B.29) family.</text>
</comment>
<dbReference type="EMBL" id="CP000438">
    <property type="protein sequence ID" value="ABJ12148.1"/>
    <property type="molecule type" value="Genomic_DNA"/>
</dbReference>
<dbReference type="RefSeq" id="WP_003091017.1">
    <property type="nucleotide sequence ID" value="NZ_CP034244.1"/>
</dbReference>
<dbReference type="KEGG" id="pau:PA14_26450"/>
<dbReference type="PseudoCAP" id="PA14_26450"/>
<dbReference type="HOGENOM" id="CLU_096410_0_0_6"/>
<dbReference type="BioCyc" id="PAER208963:G1G74-2202-MONOMER"/>
<dbReference type="Proteomes" id="UP000000653">
    <property type="component" value="Chromosome"/>
</dbReference>
<dbReference type="GO" id="GO:0005886">
    <property type="term" value="C:plasma membrane"/>
    <property type="evidence" value="ECO:0007669"/>
    <property type="project" value="UniProtKB-SubCell"/>
</dbReference>
<dbReference type="GO" id="GO:0005384">
    <property type="term" value="F:manganese ion transmembrane transporter activity"/>
    <property type="evidence" value="ECO:0007669"/>
    <property type="project" value="UniProtKB-UniRule"/>
</dbReference>
<dbReference type="HAMAP" id="MF_01521">
    <property type="entry name" value="MntP_pump"/>
    <property type="match status" value="1"/>
</dbReference>
<dbReference type="InterPro" id="IPR003810">
    <property type="entry name" value="Mntp/YtaF"/>
</dbReference>
<dbReference type="InterPro" id="IPR022929">
    <property type="entry name" value="Put_MntP"/>
</dbReference>
<dbReference type="NCBIfam" id="NF008546">
    <property type="entry name" value="PRK11469.1"/>
    <property type="match status" value="1"/>
</dbReference>
<dbReference type="PANTHER" id="PTHR35529">
    <property type="entry name" value="MANGANESE EFFLUX PUMP MNTP-RELATED"/>
    <property type="match status" value="1"/>
</dbReference>
<dbReference type="PANTHER" id="PTHR35529:SF1">
    <property type="entry name" value="MANGANESE EFFLUX PUMP MNTP-RELATED"/>
    <property type="match status" value="1"/>
</dbReference>
<dbReference type="Pfam" id="PF02659">
    <property type="entry name" value="Mntp"/>
    <property type="match status" value="1"/>
</dbReference>
<name>MNTP_PSEAB</name>
<proteinExistence type="inferred from homology"/>
<feature type="chain" id="PRO_0000296933" description="Putative manganese efflux pump MntP">
    <location>
        <begin position="1"/>
        <end position="189"/>
    </location>
</feature>
<feature type="transmembrane region" description="Helical" evidence="1">
    <location>
        <begin position="3"/>
        <end position="23"/>
    </location>
</feature>
<feature type="transmembrane region" description="Helical" evidence="1">
    <location>
        <begin position="41"/>
        <end position="61"/>
    </location>
</feature>
<feature type="transmembrane region" description="Helical" evidence="1">
    <location>
        <begin position="65"/>
        <end position="85"/>
    </location>
</feature>
<feature type="transmembrane region" description="Helical" evidence="1">
    <location>
        <begin position="106"/>
        <end position="128"/>
    </location>
</feature>
<feature type="transmembrane region" description="Helical" evidence="1">
    <location>
        <begin position="141"/>
        <end position="161"/>
    </location>
</feature>
<feature type="transmembrane region" description="Helical" evidence="1">
    <location>
        <begin position="168"/>
        <end position="188"/>
    </location>
</feature>
<organism>
    <name type="scientific">Pseudomonas aeruginosa (strain UCBPP-PA14)</name>
    <dbReference type="NCBI Taxonomy" id="208963"/>
    <lineage>
        <taxon>Bacteria</taxon>
        <taxon>Pseudomonadati</taxon>
        <taxon>Pseudomonadota</taxon>
        <taxon>Gammaproteobacteria</taxon>
        <taxon>Pseudomonadales</taxon>
        <taxon>Pseudomonadaceae</taxon>
        <taxon>Pseudomonas</taxon>
    </lineage>
</organism>
<reference key="1">
    <citation type="journal article" date="2006" name="Genome Biol.">
        <title>Genomic analysis reveals that Pseudomonas aeruginosa virulence is combinatorial.</title>
        <authorList>
            <person name="Lee D.G."/>
            <person name="Urbach J.M."/>
            <person name="Wu G."/>
            <person name="Liberati N.T."/>
            <person name="Feinbaum R.L."/>
            <person name="Miyata S."/>
            <person name="Diggins L.T."/>
            <person name="He J."/>
            <person name="Saucier M."/>
            <person name="Deziel E."/>
            <person name="Friedman L."/>
            <person name="Li L."/>
            <person name="Grills G."/>
            <person name="Montgomery K."/>
            <person name="Kucherlapati R."/>
            <person name="Rahme L.G."/>
            <person name="Ausubel F.M."/>
        </authorList>
    </citation>
    <scope>NUCLEOTIDE SEQUENCE [LARGE SCALE GENOMIC DNA]</scope>
    <source>
        <strain>UCBPP-PA14</strain>
    </source>
</reference>
<protein>
    <recommendedName>
        <fullName evidence="1">Putative manganese efflux pump MntP</fullName>
    </recommendedName>
</protein>
<accession>Q02P72</accession>
<keyword id="KW-0997">Cell inner membrane</keyword>
<keyword id="KW-1003">Cell membrane</keyword>
<keyword id="KW-0406">Ion transport</keyword>
<keyword id="KW-0464">Manganese</keyword>
<keyword id="KW-0472">Membrane</keyword>
<keyword id="KW-0812">Transmembrane</keyword>
<keyword id="KW-1133">Transmembrane helix</keyword>
<keyword id="KW-0813">Transport</keyword>
<sequence length="189" mass="19732">MNPVSLIFLAFAMSTDAFAAAIGKGSSLDRPRLSEALRTGIIFGVIEAITPLVGWLLGQAASQFVADWDHWIAFVLLVLLGLHMIHNGLRADHATEQEKPGQHSFWILAVTALATSIDALAVGVGLAFVDVNIFLAAGAIGLATMTMVTLGTMLGRALGAVTGKRAEMVGGVVLILVGATILYEHLSAA</sequence>
<evidence type="ECO:0000255" key="1">
    <source>
        <dbReference type="HAMAP-Rule" id="MF_01521"/>
    </source>
</evidence>
<gene>
    <name evidence="1" type="primary">mntP</name>
    <name type="ordered locus">PA14_26450</name>
</gene>